<comment type="function">
    <text evidence="5 6">Protects cells against oxidative stress by converting superoxide radicals to hydrogen peroxide (PubMed:9628580). Oxidative stress is involved in various biological dysfunctions and senescence (PubMed:9628580).</text>
</comment>
<comment type="catalytic activity">
    <molecule>Isoform 1</molecule>
    <reaction evidence="5">
        <text>2 superoxide + 2 H(+) = H2O2 + O2</text>
        <dbReference type="Rhea" id="RHEA:20696"/>
        <dbReference type="ChEBI" id="CHEBI:15378"/>
        <dbReference type="ChEBI" id="CHEBI:15379"/>
        <dbReference type="ChEBI" id="CHEBI:16240"/>
        <dbReference type="ChEBI" id="CHEBI:18421"/>
        <dbReference type="EC" id="1.15.1.1"/>
    </reaction>
    <physiologicalReaction direction="left-to-right" evidence="5">
        <dbReference type="Rhea" id="RHEA:20697"/>
    </physiologicalReaction>
</comment>
<comment type="catalytic activity">
    <molecule>Isoform 2</molecule>
    <reaction evidence="5">
        <text>2 superoxide + 2 H(+) = H2O2 + O2</text>
        <dbReference type="Rhea" id="RHEA:20696"/>
        <dbReference type="ChEBI" id="CHEBI:15378"/>
        <dbReference type="ChEBI" id="CHEBI:15379"/>
        <dbReference type="ChEBI" id="CHEBI:16240"/>
        <dbReference type="ChEBI" id="CHEBI:18421"/>
        <dbReference type="EC" id="1.15.1.1"/>
    </reaction>
    <physiologicalReaction direction="left-to-right" evidence="5">
        <dbReference type="Rhea" id="RHEA:20697"/>
    </physiologicalReaction>
</comment>
<comment type="cofactor">
    <cofactor evidence="1">
        <name>Cu cation</name>
        <dbReference type="ChEBI" id="CHEBI:23378"/>
    </cofactor>
    <text evidence="1">Binds 1 copper ion per subunit.</text>
</comment>
<comment type="cofactor">
    <cofactor evidence="1">
        <name>Zn(2+)</name>
        <dbReference type="ChEBI" id="CHEBI:29105"/>
    </cofactor>
    <text evidence="1">Binds 1 zinc ion per subunit.</text>
</comment>
<comment type="subcellular location">
    <molecule>Isoform 1</molecule>
    <subcellularLocation>
        <location evidence="5">Secreted</location>
        <location evidence="5">Extracellular space</location>
    </subcellularLocation>
</comment>
<comment type="subcellular location">
    <molecule>Isoform 2</molecule>
    <subcellularLocation>
        <location evidence="5">Membrane</location>
        <topology evidence="7">Peripheral membrane protein</topology>
    </subcellularLocation>
</comment>
<comment type="alternative products">
    <event type="alternative splicing"/>
    <isoform>
        <id>P34461-2</id>
        <name>2</name>
        <name>Sod4-2</name>
        <sequence type="displayed"/>
    </isoform>
    <isoform>
        <id>P34461-1</id>
        <name>1</name>
        <name>Sod4-1</name>
        <sequence type="described" ref="VSP_007920"/>
    </isoform>
</comment>
<comment type="tissue specificity">
    <molecule>Isoform 2</molecule>
    <text evidence="5">Isoform 2 is preferentially expressed in eggs.</text>
</comment>
<comment type="developmental stage">
    <text evidence="8">Isoforms are expressed differently during development, while isoform 2 is preferentially expressed in eggs, isoform 1 is preferentially expressed in the adults.</text>
</comment>
<comment type="similarity">
    <text evidence="7">Belongs to the Cu-Zn superoxide dismutase family.</text>
</comment>
<organism>
    <name type="scientific">Caenorhabditis elegans</name>
    <dbReference type="NCBI Taxonomy" id="6239"/>
    <lineage>
        <taxon>Eukaryota</taxon>
        <taxon>Metazoa</taxon>
        <taxon>Ecdysozoa</taxon>
        <taxon>Nematoda</taxon>
        <taxon>Chromadorea</taxon>
        <taxon>Rhabditida</taxon>
        <taxon>Rhabditina</taxon>
        <taxon>Rhabditomorpha</taxon>
        <taxon>Rhabditoidea</taxon>
        <taxon>Rhabditidae</taxon>
        <taxon>Peloderinae</taxon>
        <taxon>Caenorhabditis</taxon>
    </lineage>
</organism>
<accession>P34461</accession>
<accession>O61260</accession>
<gene>
    <name type="primary">sod-4</name>
    <name type="ORF">F55H2.1</name>
</gene>
<proteinExistence type="evidence at protein level"/>
<evidence type="ECO:0000250" key="1"/>
<evidence type="ECO:0000255" key="2"/>
<evidence type="ECO:0000269" key="3">
    <source>
    </source>
</evidence>
<evidence type="ECO:0000269" key="4">
    <source>
    </source>
</evidence>
<evidence type="ECO:0000269" key="5">
    <source>
    </source>
</evidence>
<evidence type="ECO:0000303" key="6">
    <source>
    </source>
</evidence>
<evidence type="ECO:0000305" key="7"/>
<evidence type="ECO:0000305" key="8">
    <source>
    </source>
</evidence>
<name>SODE_CAEEL</name>
<dbReference type="EC" id="1.15.1.1" evidence="5"/>
<dbReference type="EMBL" id="AB003924">
    <property type="protein sequence ID" value="BAA28262.1"/>
    <property type="molecule type" value="mRNA"/>
</dbReference>
<dbReference type="EMBL" id="Z27080">
    <property type="protein sequence ID" value="CAB61015.1"/>
    <property type="molecule type" value="Genomic_DNA"/>
</dbReference>
<dbReference type="PIR" id="JE0097">
    <property type="entry name" value="JE0097"/>
</dbReference>
<dbReference type="PIR" id="JE0098">
    <property type="entry name" value="JE0098"/>
</dbReference>
<dbReference type="PIR" id="S40984">
    <property type="entry name" value="S40984"/>
</dbReference>
<dbReference type="RefSeq" id="NP_001255003.1">
    <molecule id="P34461-1"/>
    <property type="nucleotide sequence ID" value="NM_001268074.5"/>
</dbReference>
<dbReference type="SMR" id="P34461"/>
<dbReference type="FunCoup" id="P34461">
    <property type="interactions" value="76"/>
</dbReference>
<dbReference type="STRING" id="6239.F55H2.1b.1"/>
<dbReference type="GlyCosmos" id="P34461">
    <property type="glycosylation" value="1 site, No reported glycans"/>
</dbReference>
<dbReference type="iPTMnet" id="P34461"/>
<dbReference type="PaxDb" id="6239-F55H2.1b"/>
<dbReference type="PeptideAtlas" id="P34461"/>
<dbReference type="EnsemblMetazoa" id="F55H2.1a.1">
    <molecule id="P34461-1"/>
    <property type="protein sequence ID" value="F55H2.1a.1"/>
    <property type="gene ID" value="WBGene00004933"/>
</dbReference>
<dbReference type="EnsemblMetazoa" id="F55H2.1a.2">
    <molecule id="P34461-1"/>
    <property type="protein sequence ID" value="F55H2.1a.2"/>
    <property type="gene ID" value="WBGene00004933"/>
</dbReference>
<dbReference type="GeneID" id="176336"/>
<dbReference type="KEGG" id="cel:CELE_F55H2.1"/>
<dbReference type="UCSC" id="F55H2.1">
    <molecule id="P34461-1"/>
    <property type="organism name" value="c. elegans"/>
</dbReference>
<dbReference type="AGR" id="WB:WBGene00004933"/>
<dbReference type="CTD" id="176336"/>
<dbReference type="WormBase" id="F55H2.1a">
    <molecule id="P34461-1"/>
    <property type="protein sequence ID" value="CE25009"/>
    <property type="gene ID" value="WBGene00004933"/>
    <property type="gene designation" value="sod-4"/>
</dbReference>
<dbReference type="eggNOG" id="KOG0441">
    <property type="taxonomic scope" value="Eukaryota"/>
</dbReference>
<dbReference type="GeneTree" id="ENSGT00940000155551"/>
<dbReference type="InParanoid" id="P34461"/>
<dbReference type="OrthoDB" id="2015551at2759"/>
<dbReference type="PhylomeDB" id="P34461"/>
<dbReference type="PRO" id="PR:P34461"/>
<dbReference type="Proteomes" id="UP000001940">
    <property type="component" value="Chromosome III"/>
</dbReference>
<dbReference type="Bgee" id="WBGene00004933">
    <property type="expression patterns" value="Expressed in pharyngeal muscle cell (C elegans) and 3 other cell types or tissues"/>
</dbReference>
<dbReference type="ExpressionAtlas" id="P34461">
    <property type="expression patterns" value="baseline and differential"/>
</dbReference>
<dbReference type="GO" id="GO:0005615">
    <property type="term" value="C:extracellular space"/>
    <property type="evidence" value="ECO:0000314"/>
    <property type="project" value="WormBase"/>
</dbReference>
<dbReference type="GO" id="GO:0016020">
    <property type="term" value="C:membrane"/>
    <property type="evidence" value="ECO:0000314"/>
    <property type="project" value="WormBase"/>
</dbReference>
<dbReference type="GO" id="GO:0005507">
    <property type="term" value="F:copper ion binding"/>
    <property type="evidence" value="ECO:0000318"/>
    <property type="project" value="GO_Central"/>
</dbReference>
<dbReference type="GO" id="GO:0004784">
    <property type="term" value="F:superoxide dismutase activity"/>
    <property type="evidence" value="ECO:0000314"/>
    <property type="project" value="WormBase"/>
</dbReference>
<dbReference type="GO" id="GO:0019430">
    <property type="term" value="P:removal of superoxide radicals"/>
    <property type="evidence" value="ECO:0000318"/>
    <property type="project" value="GO_Central"/>
</dbReference>
<dbReference type="GO" id="GO:0006801">
    <property type="term" value="P:superoxide metabolic process"/>
    <property type="evidence" value="ECO:0000314"/>
    <property type="project" value="WormBase"/>
</dbReference>
<dbReference type="CDD" id="cd00305">
    <property type="entry name" value="Cu-Zn_Superoxide_Dismutase"/>
    <property type="match status" value="1"/>
</dbReference>
<dbReference type="FunFam" id="2.60.40.200:FF:000004">
    <property type="entry name" value="Copper chaperone for superoxide dismutase"/>
    <property type="match status" value="1"/>
</dbReference>
<dbReference type="Gene3D" id="2.60.40.200">
    <property type="entry name" value="Superoxide dismutase, copper/zinc binding domain"/>
    <property type="match status" value="1"/>
</dbReference>
<dbReference type="InterPro" id="IPR036423">
    <property type="entry name" value="SOD-like_Cu/Zn_dom_sf"/>
</dbReference>
<dbReference type="InterPro" id="IPR024134">
    <property type="entry name" value="SOD_Cu/Zn_/chaperone"/>
</dbReference>
<dbReference type="InterPro" id="IPR018152">
    <property type="entry name" value="SOD_Cu/Zn_BS"/>
</dbReference>
<dbReference type="InterPro" id="IPR001424">
    <property type="entry name" value="SOD_Cu_Zn_dom"/>
</dbReference>
<dbReference type="PANTHER" id="PTHR10003">
    <property type="entry name" value="SUPEROXIDE DISMUTASE CU-ZN -RELATED"/>
    <property type="match status" value="1"/>
</dbReference>
<dbReference type="Pfam" id="PF00080">
    <property type="entry name" value="Sod_Cu"/>
    <property type="match status" value="1"/>
</dbReference>
<dbReference type="PRINTS" id="PR00068">
    <property type="entry name" value="CUZNDISMTASE"/>
</dbReference>
<dbReference type="SUPFAM" id="SSF49329">
    <property type="entry name" value="Cu,Zn superoxide dismutase-like"/>
    <property type="match status" value="1"/>
</dbReference>
<dbReference type="PROSITE" id="PS00087">
    <property type="entry name" value="SOD_CU_ZN_1"/>
    <property type="match status" value="1"/>
</dbReference>
<dbReference type="PROSITE" id="PS00332">
    <property type="entry name" value="SOD_CU_ZN_2"/>
    <property type="match status" value="1"/>
</dbReference>
<keyword id="KW-0025">Alternative splicing</keyword>
<keyword id="KW-0049">Antioxidant</keyword>
<keyword id="KW-0186">Copper</keyword>
<keyword id="KW-1015">Disulfide bond</keyword>
<keyword id="KW-0325">Glycoprotein</keyword>
<keyword id="KW-0472">Membrane</keyword>
<keyword id="KW-0479">Metal-binding</keyword>
<keyword id="KW-0560">Oxidoreductase</keyword>
<keyword id="KW-1185">Reference proteome</keyword>
<keyword id="KW-0964">Secreted</keyword>
<keyword id="KW-0732">Signal</keyword>
<keyword id="KW-0862">Zinc</keyword>
<reference key="1">
    <citation type="journal article" date="1998" name="DNA Res.">
        <title>A novel superoxide dismutase gene encoding membrane-bound and extracellular isoforms by alternative splicing in Caenorhabditis elegans.</title>
        <authorList>
            <person name="Fujii M."/>
            <person name="Ishii N."/>
            <person name="Joguchi A."/>
            <person name="Yasuda K."/>
            <person name="Ayusawa D."/>
        </authorList>
    </citation>
    <scope>NUCLEOTIDE SEQUENCE [MRNA] (ISOFORMS 1 AND 2)</scope>
    <scope>FUNCTION</scope>
    <scope>CATALYTIC ACTIVITY (ISOFORMS 1 AND 2)</scope>
    <scope>SUBCELLULAR LOCATION (ISOFORMS 1 AND 2)</scope>
    <scope>TISSUE SPECIFICITY (ISOFORM 2)</scope>
    <scope>DEVELOPMENTAL STAGE</scope>
    <source>
        <strain>Bristol N2</strain>
    </source>
</reference>
<reference key="2">
    <citation type="journal article" date="1994" name="Nature">
        <title>2.2 Mb of contiguous nucleotide sequence from chromosome III of C. elegans.</title>
        <authorList>
            <person name="Wilson R."/>
            <person name="Ainscough R."/>
            <person name="Anderson K."/>
            <person name="Baynes C."/>
            <person name="Berks M."/>
            <person name="Bonfield J."/>
            <person name="Burton J."/>
            <person name="Connell M."/>
            <person name="Copsey T."/>
            <person name="Cooper J."/>
            <person name="Coulson A."/>
            <person name="Craxton M."/>
            <person name="Dear S."/>
            <person name="Du Z."/>
            <person name="Durbin R."/>
            <person name="Favello A."/>
            <person name="Fraser A."/>
            <person name="Fulton L."/>
            <person name="Gardner A."/>
            <person name="Green P."/>
            <person name="Hawkins T."/>
            <person name="Hillier L."/>
            <person name="Jier M."/>
            <person name="Johnston L."/>
            <person name="Jones M."/>
            <person name="Kershaw J."/>
            <person name="Kirsten J."/>
            <person name="Laisster N."/>
            <person name="Latreille P."/>
            <person name="Lightning J."/>
            <person name="Lloyd C."/>
            <person name="Mortimore B."/>
            <person name="O'Callaghan M."/>
            <person name="Parsons J."/>
            <person name="Percy C."/>
            <person name="Rifken L."/>
            <person name="Roopra A."/>
            <person name="Saunders D."/>
            <person name="Shownkeen R."/>
            <person name="Sims M."/>
            <person name="Smaldon N."/>
            <person name="Smith A."/>
            <person name="Smith M."/>
            <person name="Sonnhammer E."/>
            <person name="Staden R."/>
            <person name="Sulston J."/>
            <person name="Thierry-Mieg J."/>
            <person name="Thomas K."/>
            <person name="Vaudin M."/>
            <person name="Vaughan K."/>
            <person name="Waterston R."/>
            <person name="Watson A."/>
            <person name="Weinstock L."/>
            <person name="Wilkinson-Sproat J."/>
            <person name="Wohldman P."/>
        </authorList>
    </citation>
    <scope>NUCLEOTIDE SEQUENCE [LARGE SCALE GENOMIC DNA]</scope>
    <source>
        <strain>Bristol N2</strain>
    </source>
</reference>
<reference key="3">
    <citation type="journal article" date="1998" name="Science">
        <title>Genome sequence of the nematode C. elegans: a platform for investigating biology.</title>
        <authorList>
            <consortium name="The C. elegans sequencing consortium"/>
        </authorList>
    </citation>
    <scope>NUCLEOTIDE SEQUENCE [LARGE SCALE GENOMIC DNA]</scope>
    <source>
        <strain>Bristol N2</strain>
    </source>
</reference>
<reference key="4">
    <citation type="journal article" date="2003" name="Nat. Biotechnol.">
        <title>Lectin affinity capture, isotope-coded tagging and mass spectrometry to identify N-linked glycoproteins.</title>
        <authorList>
            <person name="Kaji H."/>
            <person name="Saito H."/>
            <person name="Yamauchi Y."/>
            <person name="Shinkawa T."/>
            <person name="Taoka M."/>
            <person name="Hirabayashi J."/>
            <person name="Kasai K."/>
            <person name="Takahashi N."/>
            <person name="Isobe T."/>
        </authorList>
    </citation>
    <scope>GLYCOSYLATION [LARGE SCALE ANALYSIS] AT ASN-56</scope>
    <scope>IDENTIFICATION BY MASS SPECTROMETRY</scope>
    <source>
        <strain>Bristol N2</strain>
    </source>
</reference>
<reference key="5">
    <citation type="journal article" date="2007" name="Mol. Cell. Proteomics">
        <title>Proteomics reveals N-linked glycoprotein diversity in Caenorhabditis elegans and suggests an atypical translocation mechanism for integral membrane proteins.</title>
        <authorList>
            <person name="Kaji H."/>
            <person name="Kamiie J."/>
            <person name="Kawakami H."/>
            <person name="Kido K."/>
            <person name="Yamauchi Y."/>
            <person name="Shinkawa T."/>
            <person name="Taoka M."/>
            <person name="Takahashi N."/>
            <person name="Isobe T."/>
        </authorList>
    </citation>
    <scope>GLYCOSYLATION [LARGE SCALE ANALYSIS] AT ASN-56</scope>
    <scope>IDENTIFICATION BY MASS SPECTROMETRY</scope>
    <source>
        <strain>Bristol N2</strain>
    </source>
</reference>
<protein>
    <recommendedName>
        <fullName>Extracellular superoxide dismutase [Cu-Zn]</fullName>
        <shortName>EC-SOD</shortName>
        <ecNumber evidence="5">1.15.1.1</ecNumber>
    </recommendedName>
</protein>
<feature type="signal peptide" evidence="2">
    <location>
        <begin position="1"/>
        <end position="19"/>
    </location>
</feature>
<feature type="chain" id="PRO_0000032861" description="Extracellular superoxide dismutase [Cu-Zn]">
    <location>
        <begin position="20"/>
        <end position="221"/>
    </location>
</feature>
<feature type="binding site" evidence="1">
    <location>
        <position position="70"/>
    </location>
    <ligand>
        <name>Cu cation</name>
        <dbReference type="ChEBI" id="CHEBI:23378"/>
        <note>catalytic</note>
    </ligand>
</feature>
<feature type="binding site" evidence="1">
    <location>
        <position position="72"/>
    </location>
    <ligand>
        <name>Cu cation</name>
        <dbReference type="ChEBI" id="CHEBI:23378"/>
        <note>catalytic</note>
    </ligand>
</feature>
<feature type="binding site" evidence="1">
    <location>
        <position position="87"/>
    </location>
    <ligand>
        <name>Cu cation</name>
        <dbReference type="ChEBI" id="CHEBI:23378"/>
        <note>catalytic</note>
    </ligand>
</feature>
<feature type="binding site" evidence="1">
    <location>
        <position position="87"/>
    </location>
    <ligand>
        <name>Zn(2+)</name>
        <dbReference type="ChEBI" id="CHEBI:29105"/>
        <note>structural</note>
    </ligand>
</feature>
<feature type="binding site" evidence="1">
    <location>
        <position position="95"/>
    </location>
    <ligand>
        <name>Zn(2+)</name>
        <dbReference type="ChEBI" id="CHEBI:29105"/>
        <note>structural</note>
    </ligand>
</feature>
<feature type="binding site" evidence="1">
    <location>
        <position position="104"/>
    </location>
    <ligand>
        <name>Zn(2+)</name>
        <dbReference type="ChEBI" id="CHEBI:29105"/>
        <note>structural</note>
    </ligand>
</feature>
<feature type="binding site" evidence="1">
    <location>
        <position position="107"/>
    </location>
    <ligand>
        <name>Zn(2+)</name>
        <dbReference type="ChEBI" id="CHEBI:29105"/>
        <note>structural</note>
    </ligand>
</feature>
<feature type="binding site" evidence="1">
    <location>
        <position position="144"/>
    </location>
    <ligand>
        <name>Cu cation</name>
        <dbReference type="ChEBI" id="CHEBI:23378"/>
        <note>catalytic</note>
    </ligand>
</feature>
<feature type="glycosylation site" description="N-linked (GlcNAc...) asparagine" evidence="3 4">
    <location>
        <position position="56"/>
    </location>
</feature>
<feature type="disulfide bond" evidence="1">
    <location>
        <begin position="81"/>
        <end position="170"/>
    </location>
</feature>
<feature type="splice variant" id="VSP_007920" description="In isoform 1." evidence="6">
    <location>
        <begin position="177"/>
        <end position="221"/>
    </location>
</feature>
<sequence length="221" mass="23326">MKTRVVLILALSVCIEAASEVIRARAYIFKAEAGKIPTELIGTIDFDQSGSFLKLNGSVSGLAAGKHGFHIHEKGDTGNGCLSAGGHYNPHKLSHGAPDDSNRHIGDLGNIESPASGDTLISVSDSLASLSGQYSIIGRSVVIHEKTDDLGRGTSDQSKTTGNAGSRLACGTIGTVEERILETTTASLPPVTQSQPIGSSSYYYSTFYLPIILYFLLSRIL</sequence>